<gene>
    <name type="primary">RSA3</name>
    <name type="ordered locus">YLR221C</name>
</gene>
<dbReference type="EMBL" id="U19027">
    <property type="protein sequence ID" value="AAB67410.1"/>
    <property type="molecule type" value="Genomic_DNA"/>
</dbReference>
<dbReference type="EMBL" id="AY557937">
    <property type="protein sequence ID" value="AAS56263.1"/>
    <property type="molecule type" value="Genomic_DNA"/>
</dbReference>
<dbReference type="EMBL" id="BK006945">
    <property type="protein sequence ID" value="DAA09537.1"/>
    <property type="molecule type" value="Genomic_DNA"/>
</dbReference>
<dbReference type="PIR" id="S51444">
    <property type="entry name" value="S51444"/>
</dbReference>
<dbReference type="RefSeq" id="NP_013322.1">
    <property type="nucleotide sequence ID" value="NM_001182108.1"/>
</dbReference>
<dbReference type="SMR" id="Q05942"/>
<dbReference type="BioGRID" id="31488">
    <property type="interactions" value="145"/>
</dbReference>
<dbReference type="ComplexPortal" id="CPX-1421">
    <property type="entry name" value="NOP8 60s ribosome pre-assembly complex"/>
</dbReference>
<dbReference type="DIP" id="DIP-4421N"/>
<dbReference type="FunCoup" id="Q05942">
    <property type="interactions" value="333"/>
</dbReference>
<dbReference type="IntAct" id="Q05942">
    <property type="interactions" value="27"/>
</dbReference>
<dbReference type="MINT" id="Q05942"/>
<dbReference type="STRING" id="4932.YLR221C"/>
<dbReference type="iPTMnet" id="Q05942"/>
<dbReference type="PaxDb" id="4932-YLR221C"/>
<dbReference type="PeptideAtlas" id="Q05942"/>
<dbReference type="EnsemblFungi" id="YLR221C_mRNA">
    <property type="protein sequence ID" value="YLR221C"/>
    <property type="gene ID" value="YLR221C"/>
</dbReference>
<dbReference type="GeneID" id="850918"/>
<dbReference type="KEGG" id="sce:YLR221C"/>
<dbReference type="AGR" id="SGD:S000004211"/>
<dbReference type="SGD" id="S000004211">
    <property type="gene designation" value="RSA3"/>
</dbReference>
<dbReference type="VEuPathDB" id="FungiDB:YLR221C"/>
<dbReference type="eggNOG" id="ENOG502S5DP">
    <property type="taxonomic scope" value="Eukaryota"/>
</dbReference>
<dbReference type="HOGENOM" id="CLU_119118_0_0_1"/>
<dbReference type="InParanoid" id="Q05942"/>
<dbReference type="OMA" id="DAHNNNK"/>
<dbReference type="OrthoDB" id="69550at2759"/>
<dbReference type="BioCyc" id="YEAST:G3O-32335-MONOMER"/>
<dbReference type="BioGRID-ORCS" id="850918">
    <property type="hits" value="2 hits in 10 CRISPR screens"/>
</dbReference>
<dbReference type="PRO" id="PR:Q05942"/>
<dbReference type="Proteomes" id="UP000002311">
    <property type="component" value="Chromosome XII"/>
</dbReference>
<dbReference type="RNAct" id="Q05942">
    <property type="molecule type" value="protein"/>
</dbReference>
<dbReference type="GO" id="GO:0005730">
    <property type="term" value="C:nucleolus"/>
    <property type="evidence" value="ECO:0007005"/>
    <property type="project" value="SGD"/>
</dbReference>
<dbReference type="GO" id="GO:0005634">
    <property type="term" value="C:nucleus"/>
    <property type="evidence" value="ECO:0000303"/>
    <property type="project" value="ComplexPortal"/>
</dbReference>
<dbReference type="GO" id="GO:0030687">
    <property type="term" value="C:preribosome, large subunit precursor"/>
    <property type="evidence" value="ECO:0000314"/>
    <property type="project" value="SGD"/>
</dbReference>
<dbReference type="GO" id="GO:0000027">
    <property type="term" value="P:ribosomal large subunit assembly"/>
    <property type="evidence" value="ECO:0000315"/>
    <property type="project" value="SGD"/>
</dbReference>
<dbReference type="GO" id="GO:0042273">
    <property type="term" value="P:ribosomal large subunit biogenesis"/>
    <property type="evidence" value="ECO:0000303"/>
    <property type="project" value="ComplexPortal"/>
</dbReference>
<dbReference type="InterPro" id="IPR051898">
    <property type="entry name" value="Ribosome_Assembly_3"/>
</dbReference>
<dbReference type="InterPro" id="IPR028217">
    <property type="entry name" value="Rsa3_C"/>
</dbReference>
<dbReference type="PANTHER" id="PTHR28127">
    <property type="entry name" value="RIBOSOME ASSEMBLY PROTEIN 3"/>
    <property type="match status" value="1"/>
</dbReference>
<dbReference type="PANTHER" id="PTHR28127:SF1">
    <property type="entry name" value="RIBOSOME ASSEMBLY PROTEIN 3"/>
    <property type="match status" value="1"/>
</dbReference>
<dbReference type="Pfam" id="PF14615">
    <property type="entry name" value="Rsa3"/>
    <property type="match status" value="1"/>
</dbReference>
<name>RSA3_YEAST</name>
<evidence type="ECO:0000256" key="1">
    <source>
        <dbReference type="SAM" id="MobiDB-lite"/>
    </source>
</evidence>
<evidence type="ECO:0000269" key="2">
    <source>
    </source>
</evidence>
<evidence type="ECO:0000269" key="3">
    <source>
    </source>
</evidence>
<evidence type="ECO:0000269" key="4">
    <source>
    </source>
</evidence>
<evidence type="ECO:0000269" key="5">
    <source>
    </source>
</evidence>
<evidence type="ECO:0000305" key="6"/>
<evidence type="ECO:0007744" key="7">
    <source>
    </source>
</evidence>
<evidence type="ECO:0007744" key="8">
    <source>
    </source>
</evidence>
<accession>Q05942</accession>
<accession>D6VYM1</accession>
<keyword id="KW-0539">Nucleus</keyword>
<keyword id="KW-0597">Phosphoprotein</keyword>
<keyword id="KW-1185">Reference proteome</keyword>
<keyword id="KW-0687">Ribonucleoprotein</keyword>
<keyword id="KW-0690">Ribosome biogenesis</keyword>
<protein>
    <recommendedName>
        <fullName>Ribosome assembly protein 3</fullName>
    </recommendedName>
</protein>
<organism>
    <name type="scientific">Saccharomyces cerevisiae (strain ATCC 204508 / S288c)</name>
    <name type="common">Baker's yeast</name>
    <dbReference type="NCBI Taxonomy" id="559292"/>
    <lineage>
        <taxon>Eukaryota</taxon>
        <taxon>Fungi</taxon>
        <taxon>Dikarya</taxon>
        <taxon>Ascomycota</taxon>
        <taxon>Saccharomycotina</taxon>
        <taxon>Saccharomycetes</taxon>
        <taxon>Saccharomycetales</taxon>
        <taxon>Saccharomycetaceae</taxon>
        <taxon>Saccharomyces</taxon>
    </lineage>
</organism>
<sequence>MSAGDISAINIKSVKKNRRRKKRRTADVSSSDSSSSDPSSESEKEEIQNGAIEEHVGENGKSDHVFSKGNDEDKQEDIAIEVSDVELTDEESKDLKLNSKEVIDDLTKISLSKIPEPTKSQNKEGFMNASKIAENIKLAREEYNELAENFVPKGKDKTKLREEYLNLLFENYGDDINRLRAAPDFTNKSLSILADALQEGIGMFDIGELELVLKNKEMEN</sequence>
<feature type="chain" id="PRO_0000097468" description="Ribosome assembly protein 3">
    <location>
        <begin position="1"/>
        <end position="220"/>
    </location>
</feature>
<feature type="region of interest" description="Disordered" evidence="1">
    <location>
        <begin position="1"/>
        <end position="91"/>
    </location>
</feature>
<feature type="compositionally biased region" description="Basic residues" evidence="1">
    <location>
        <begin position="13"/>
        <end position="24"/>
    </location>
</feature>
<feature type="compositionally biased region" description="Low complexity" evidence="1">
    <location>
        <begin position="29"/>
        <end position="39"/>
    </location>
</feature>
<feature type="compositionally biased region" description="Basic and acidic residues" evidence="1">
    <location>
        <begin position="41"/>
        <end position="72"/>
    </location>
</feature>
<feature type="compositionally biased region" description="Acidic residues" evidence="1">
    <location>
        <begin position="73"/>
        <end position="91"/>
    </location>
</feature>
<feature type="modified residue" description="Phosphoserine" evidence="8">
    <location>
        <position position="83"/>
    </location>
</feature>
<feature type="modified residue" description="Phosphothreonine" evidence="8">
    <location>
        <position position="88"/>
    </location>
</feature>
<feature type="modified residue" description="Phosphoserine" evidence="7">
    <location>
        <position position="99"/>
    </location>
</feature>
<comment type="function">
    <text evidence="4">Required for efficient biogenesis of the 60S ribosomal subunit.</text>
</comment>
<comment type="subunit">
    <text evidence="4 5">Associates with nucleolar pre-ribosomal particles. Interacts with DBP6. Together with DBP6, NOP8, URB1 and URB2, forms an RNA-independent complex, which is required during early maturation of nascent 60S ribosomal subunits.</text>
</comment>
<comment type="interaction">
    <interactant intactId="EBI-33602">
        <id>Q05942</id>
    </interactant>
    <interactant intactId="EBI-5625">
        <id>P53734</id>
        <label>DBP6</label>
    </interactant>
    <organismsDiffer>false</organismsDiffer>
    <experiments>4</experiments>
</comment>
<comment type="interaction">
    <interactant intactId="EBI-33602">
        <id>Q05942</id>
    </interactant>
    <interactant intactId="EBI-26595">
        <id>P34241</id>
        <label>URB1</label>
    </interactant>
    <organismsDiffer>false</organismsDiffer>
    <experiments>5</experiments>
</comment>
<comment type="interaction">
    <interactant intactId="EBI-33602">
        <id>Q05942</id>
    </interactant>
    <interactant intactId="EBI-25492">
        <id>P47108</id>
        <label>URB2</label>
    </interactant>
    <organismsDiffer>false</organismsDiffer>
    <experiments>6</experiments>
</comment>
<comment type="subcellular location">
    <subcellularLocation>
        <location evidence="2 4">Nucleus</location>
        <location evidence="2 4">Nucleolus</location>
    </subcellularLocation>
</comment>
<comment type="miscellaneous">
    <text evidence="3">Present with 2940 molecules/cell in log phase SD medium.</text>
</comment>
<comment type="similarity">
    <text evidence="6">Belongs to the RSA3 family.</text>
</comment>
<proteinExistence type="evidence at protein level"/>
<reference key="1">
    <citation type="journal article" date="1997" name="Nature">
        <title>The nucleotide sequence of Saccharomyces cerevisiae chromosome XII.</title>
        <authorList>
            <person name="Johnston M."/>
            <person name="Hillier L.W."/>
            <person name="Riles L."/>
            <person name="Albermann K."/>
            <person name="Andre B."/>
            <person name="Ansorge W."/>
            <person name="Benes V."/>
            <person name="Brueckner M."/>
            <person name="Delius H."/>
            <person name="Dubois E."/>
            <person name="Duesterhoeft A."/>
            <person name="Entian K.-D."/>
            <person name="Floeth M."/>
            <person name="Goffeau A."/>
            <person name="Hebling U."/>
            <person name="Heumann K."/>
            <person name="Heuss-Neitzel D."/>
            <person name="Hilbert H."/>
            <person name="Hilger F."/>
            <person name="Kleine K."/>
            <person name="Koetter P."/>
            <person name="Louis E.J."/>
            <person name="Messenguy F."/>
            <person name="Mewes H.-W."/>
            <person name="Miosga T."/>
            <person name="Moestl D."/>
            <person name="Mueller-Auer S."/>
            <person name="Nentwich U."/>
            <person name="Obermaier B."/>
            <person name="Piravandi E."/>
            <person name="Pohl T.M."/>
            <person name="Portetelle D."/>
            <person name="Purnelle B."/>
            <person name="Rechmann S."/>
            <person name="Rieger M."/>
            <person name="Rinke M."/>
            <person name="Rose M."/>
            <person name="Scharfe M."/>
            <person name="Scherens B."/>
            <person name="Scholler P."/>
            <person name="Schwager C."/>
            <person name="Schwarz S."/>
            <person name="Underwood A.P."/>
            <person name="Urrestarazu L.A."/>
            <person name="Vandenbol M."/>
            <person name="Verhasselt P."/>
            <person name="Vierendeels F."/>
            <person name="Voet M."/>
            <person name="Volckaert G."/>
            <person name="Voss H."/>
            <person name="Wambutt R."/>
            <person name="Wedler E."/>
            <person name="Wedler H."/>
            <person name="Zimmermann F.K."/>
            <person name="Zollner A."/>
            <person name="Hani J."/>
            <person name="Hoheisel J.D."/>
        </authorList>
    </citation>
    <scope>NUCLEOTIDE SEQUENCE [LARGE SCALE GENOMIC DNA]</scope>
    <source>
        <strain>ATCC 204508 / S288c</strain>
    </source>
</reference>
<reference key="2">
    <citation type="journal article" date="2014" name="G3 (Bethesda)">
        <title>The reference genome sequence of Saccharomyces cerevisiae: Then and now.</title>
        <authorList>
            <person name="Engel S.R."/>
            <person name="Dietrich F.S."/>
            <person name="Fisk D.G."/>
            <person name="Binkley G."/>
            <person name="Balakrishnan R."/>
            <person name="Costanzo M.C."/>
            <person name="Dwight S.S."/>
            <person name="Hitz B.C."/>
            <person name="Karra K."/>
            <person name="Nash R.S."/>
            <person name="Weng S."/>
            <person name="Wong E.D."/>
            <person name="Lloyd P."/>
            <person name="Skrzypek M.S."/>
            <person name="Miyasato S.R."/>
            <person name="Simison M."/>
            <person name="Cherry J.M."/>
        </authorList>
    </citation>
    <scope>GENOME REANNOTATION</scope>
    <source>
        <strain>ATCC 204508 / S288c</strain>
    </source>
</reference>
<reference key="3">
    <citation type="journal article" date="2007" name="Genome Res.">
        <title>Approaching a complete repository of sequence-verified protein-encoding clones for Saccharomyces cerevisiae.</title>
        <authorList>
            <person name="Hu Y."/>
            <person name="Rolfs A."/>
            <person name="Bhullar B."/>
            <person name="Murthy T.V.S."/>
            <person name="Zhu C."/>
            <person name="Berger M.F."/>
            <person name="Camargo A.A."/>
            <person name="Kelley F."/>
            <person name="McCarron S."/>
            <person name="Jepson D."/>
            <person name="Richardson A."/>
            <person name="Raphael J."/>
            <person name="Moreira D."/>
            <person name="Taycher E."/>
            <person name="Zuo D."/>
            <person name="Mohr S."/>
            <person name="Kane M.F."/>
            <person name="Williamson J."/>
            <person name="Simpson A.J.G."/>
            <person name="Bulyk M.L."/>
            <person name="Harlow E."/>
            <person name="Marsischky G."/>
            <person name="Kolodner R.D."/>
            <person name="LaBaer J."/>
        </authorList>
    </citation>
    <scope>NUCLEOTIDE SEQUENCE [GENOMIC DNA]</scope>
    <source>
        <strain>ATCC 204508 / S288c</strain>
    </source>
</reference>
<reference key="4">
    <citation type="journal article" date="2003" name="Nature">
        <title>Global analysis of protein localization in budding yeast.</title>
        <authorList>
            <person name="Huh W.-K."/>
            <person name="Falvo J.V."/>
            <person name="Gerke L.C."/>
            <person name="Carroll A.S."/>
            <person name="Howson R.W."/>
            <person name="Weissman J.S."/>
            <person name="O'Shea E.K."/>
        </authorList>
    </citation>
    <scope>SUBCELLULAR LOCATION [LARGE SCALE ANALYSIS]</scope>
</reference>
<reference key="5">
    <citation type="journal article" date="2003" name="Nature">
        <title>Global analysis of protein expression in yeast.</title>
        <authorList>
            <person name="Ghaemmaghami S."/>
            <person name="Huh W.-K."/>
            <person name="Bower K."/>
            <person name="Howson R.W."/>
            <person name="Belle A."/>
            <person name="Dephoure N."/>
            <person name="O'Shea E.K."/>
            <person name="Weissman J.S."/>
        </authorList>
    </citation>
    <scope>LEVEL OF PROTEIN EXPRESSION [LARGE SCALE ANALYSIS]</scope>
</reference>
<reference key="6">
    <citation type="journal article" date="2004" name="Genetics">
        <title>The putative RNA helicase Dbp6p functionally interacts with Rpl3p, Nop8p and the novel trans-acting Factor Rsa3p during biogenesis of 60S ribosomal subunits in Saccharomyces cerevisiae.</title>
        <authorList>
            <person name="de la Cruz J."/>
            <person name="Lacombe T."/>
            <person name="Deloche O."/>
            <person name="Linder P."/>
            <person name="Kressler D."/>
        </authorList>
    </citation>
    <scope>FUNCTION</scope>
    <scope>SUBCELLULAR LOCATION</scope>
    <scope>IDENTIFICATION IN PRE-RIBOSOMAL PARTICLES</scope>
    <scope>INTERACTION WITH DBP6</scope>
</reference>
<reference key="7">
    <citation type="journal article" date="2007" name="Mol. Cell. Biol.">
        <title>Characterization of Saccharomyces cerevisiae Npa2p (Urb2p) reveals a Low-molecular-mass complex containing Dbp6p, Npa1p (Urb1p), Nop8p, and Rsa3p involved in early steps of 60S ribosomal subunit biogenesis.</title>
        <authorList>
            <person name="Rosado I.V."/>
            <person name="Dez C."/>
            <person name="Lebaron S."/>
            <person name="Caizergues-Ferrer M."/>
            <person name="Henry Y."/>
            <person name="de la Cruz J."/>
        </authorList>
    </citation>
    <scope>IDENTIFICATION IN A COMPLEX WITH DBP6; NOP8; URB1 AND URB2</scope>
</reference>
<reference key="8">
    <citation type="journal article" date="2008" name="Mol. Cell. Proteomics">
        <title>A multidimensional chromatography technology for in-depth phosphoproteome analysis.</title>
        <authorList>
            <person name="Albuquerque C.P."/>
            <person name="Smolka M.B."/>
            <person name="Payne S.H."/>
            <person name="Bafna V."/>
            <person name="Eng J."/>
            <person name="Zhou H."/>
        </authorList>
    </citation>
    <scope>PHOSPHORYLATION [LARGE SCALE ANALYSIS] AT SER-99</scope>
    <scope>IDENTIFICATION BY MASS SPECTROMETRY [LARGE SCALE ANALYSIS]</scope>
</reference>
<reference key="9">
    <citation type="journal article" date="2009" name="Science">
        <title>Global analysis of Cdk1 substrate phosphorylation sites provides insights into evolution.</title>
        <authorList>
            <person name="Holt L.J."/>
            <person name="Tuch B.B."/>
            <person name="Villen J."/>
            <person name="Johnson A.D."/>
            <person name="Gygi S.P."/>
            <person name="Morgan D.O."/>
        </authorList>
    </citation>
    <scope>PHOSPHORYLATION [LARGE SCALE ANALYSIS] AT SER-83 AND THR-88</scope>
    <scope>IDENTIFICATION BY MASS SPECTROMETRY [LARGE SCALE ANALYSIS]</scope>
</reference>
<reference key="10">
    <citation type="journal article" date="2012" name="Proc. Natl. Acad. Sci. U.S.A.">
        <title>N-terminal acetylome analyses and functional insights of the N-terminal acetyltransferase NatB.</title>
        <authorList>
            <person name="Van Damme P."/>
            <person name="Lasa M."/>
            <person name="Polevoda B."/>
            <person name="Gazquez C."/>
            <person name="Elosegui-Artola A."/>
            <person name="Kim D.S."/>
            <person name="De Juan-Pardo E."/>
            <person name="Demeyer K."/>
            <person name="Hole K."/>
            <person name="Larrea E."/>
            <person name="Timmerman E."/>
            <person name="Prieto J."/>
            <person name="Arnesen T."/>
            <person name="Sherman F."/>
            <person name="Gevaert K."/>
            <person name="Aldabe R."/>
        </authorList>
    </citation>
    <scope>IDENTIFICATION BY MASS SPECTROMETRY [LARGE SCALE ANALYSIS]</scope>
</reference>